<evidence type="ECO:0000255" key="1">
    <source>
        <dbReference type="HAMAP-Rule" id="MF_01220"/>
    </source>
</evidence>
<gene>
    <name evidence="1" type="primary">pyrH</name>
    <name type="ordered locus">Jann_2460</name>
</gene>
<organism>
    <name type="scientific">Jannaschia sp. (strain CCS1)</name>
    <dbReference type="NCBI Taxonomy" id="290400"/>
    <lineage>
        <taxon>Bacteria</taxon>
        <taxon>Pseudomonadati</taxon>
        <taxon>Pseudomonadota</taxon>
        <taxon>Alphaproteobacteria</taxon>
        <taxon>Rhodobacterales</taxon>
        <taxon>Roseobacteraceae</taxon>
        <taxon>Jannaschia</taxon>
    </lineage>
</organism>
<accession>Q28PI5</accession>
<protein>
    <recommendedName>
        <fullName evidence="1">Uridylate kinase</fullName>
        <shortName evidence="1">UK</shortName>
        <ecNumber evidence="1">2.7.4.22</ecNumber>
    </recommendedName>
    <alternativeName>
        <fullName evidence="1">Uridine monophosphate kinase</fullName>
        <shortName evidence="1">UMP kinase</shortName>
        <shortName evidence="1">UMPK</shortName>
    </alternativeName>
</protein>
<dbReference type="EC" id="2.7.4.22" evidence="1"/>
<dbReference type="EMBL" id="CP000264">
    <property type="protein sequence ID" value="ABD55377.1"/>
    <property type="molecule type" value="Genomic_DNA"/>
</dbReference>
<dbReference type="RefSeq" id="WP_011455581.1">
    <property type="nucleotide sequence ID" value="NC_007802.1"/>
</dbReference>
<dbReference type="SMR" id="Q28PI5"/>
<dbReference type="STRING" id="290400.Jann_2460"/>
<dbReference type="KEGG" id="jan:Jann_2460"/>
<dbReference type="eggNOG" id="COG0528">
    <property type="taxonomic scope" value="Bacteria"/>
</dbReference>
<dbReference type="HOGENOM" id="CLU_033861_0_0_5"/>
<dbReference type="OrthoDB" id="9807458at2"/>
<dbReference type="UniPathway" id="UPA00159">
    <property type="reaction ID" value="UER00275"/>
</dbReference>
<dbReference type="Proteomes" id="UP000008326">
    <property type="component" value="Chromosome"/>
</dbReference>
<dbReference type="GO" id="GO:0005737">
    <property type="term" value="C:cytoplasm"/>
    <property type="evidence" value="ECO:0007669"/>
    <property type="project" value="UniProtKB-SubCell"/>
</dbReference>
<dbReference type="GO" id="GO:0005524">
    <property type="term" value="F:ATP binding"/>
    <property type="evidence" value="ECO:0007669"/>
    <property type="project" value="UniProtKB-KW"/>
</dbReference>
<dbReference type="GO" id="GO:0033862">
    <property type="term" value="F:UMP kinase activity"/>
    <property type="evidence" value="ECO:0007669"/>
    <property type="project" value="UniProtKB-EC"/>
</dbReference>
<dbReference type="GO" id="GO:0044210">
    <property type="term" value="P:'de novo' CTP biosynthetic process"/>
    <property type="evidence" value="ECO:0007669"/>
    <property type="project" value="UniProtKB-UniRule"/>
</dbReference>
<dbReference type="GO" id="GO:0006225">
    <property type="term" value="P:UDP biosynthetic process"/>
    <property type="evidence" value="ECO:0007669"/>
    <property type="project" value="TreeGrafter"/>
</dbReference>
<dbReference type="CDD" id="cd04254">
    <property type="entry name" value="AAK_UMPK-PyrH-Ec"/>
    <property type="match status" value="1"/>
</dbReference>
<dbReference type="FunFam" id="3.40.1160.10:FF:000001">
    <property type="entry name" value="Uridylate kinase"/>
    <property type="match status" value="1"/>
</dbReference>
<dbReference type="Gene3D" id="3.40.1160.10">
    <property type="entry name" value="Acetylglutamate kinase-like"/>
    <property type="match status" value="1"/>
</dbReference>
<dbReference type="HAMAP" id="MF_01220_B">
    <property type="entry name" value="PyrH_B"/>
    <property type="match status" value="1"/>
</dbReference>
<dbReference type="InterPro" id="IPR036393">
    <property type="entry name" value="AceGlu_kinase-like_sf"/>
</dbReference>
<dbReference type="InterPro" id="IPR001048">
    <property type="entry name" value="Asp/Glu/Uridylate_kinase"/>
</dbReference>
<dbReference type="InterPro" id="IPR011817">
    <property type="entry name" value="Uridylate_kinase"/>
</dbReference>
<dbReference type="InterPro" id="IPR015963">
    <property type="entry name" value="Uridylate_kinase_bac"/>
</dbReference>
<dbReference type="NCBIfam" id="TIGR02075">
    <property type="entry name" value="pyrH_bact"/>
    <property type="match status" value="1"/>
</dbReference>
<dbReference type="PANTHER" id="PTHR42833">
    <property type="entry name" value="URIDYLATE KINASE"/>
    <property type="match status" value="1"/>
</dbReference>
<dbReference type="PANTHER" id="PTHR42833:SF4">
    <property type="entry name" value="URIDYLATE KINASE PUMPKIN, CHLOROPLASTIC"/>
    <property type="match status" value="1"/>
</dbReference>
<dbReference type="Pfam" id="PF00696">
    <property type="entry name" value="AA_kinase"/>
    <property type="match status" value="1"/>
</dbReference>
<dbReference type="PIRSF" id="PIRSF005650">
    <property type="entry name" value="Uridylate_kin"/>
    <property type="match status" value="1"/>
</dbReference>
<dbReference type="SUPFAM" id="SSF53633">
    <property type="entry name" value="Carbamate kinase-like"/>
    <property type="match status" value="1"/>
</dbReference>
<reference key="1">
    <citation type="submission" date="2006-02" db="EMBL/GenBank/DDBJ databases">
        <title>Complete sequence of chromosome of Jannaschia sp. CCS1.</title>
        <authorList>
            <consortium name="US DOE Joint Genome Institute"/>
            <person name="Copeland A."/>
            <person name="Lucas S."/>
            <person name="Lapidus A."/>
            <person name="Barry K."/>
            <person name="Detter J.C."/>
            <person name="Glavina del Rio T."/>
            <person name="Hammon N."/>
            <person name="Israni S."/>
            <person name="Pitluck S."/>
            <person name="Brettin T."/>
            <person name="Bruce D."/>
            <person name="Han C."/>
            <person name="Tapia R."/>
            <person name="Gilna P."/>
            <person name="Chertkov O."/>
            <person name="Saunders E."/>
            <person name="Schmutz J."/>
            <person name="Larimer F."/>
            <person name="Land M."/>
            <person name="Kyrpides N."/>
            <person name="Lykidis A."/>
            <person name="Moran M.A."/>
            <person name="Belas R."/>
            <person name="Ye W."/>
            <person name="Buchan A."/>
            <person name="Gonzalez J.M."/>
            <person name="Schell M.A."/>
            <person name="Richardson P."/>
        </authorList>
    </citation>
    <scope>NUCLEOTIDE SEQUENCE [LARGE SCALE GENOMIC DNA]</scope>
    <source>
        <strain>CCS1</strain>
    </source>
</reference>
<proteinExistence type="inferred from homology"/>
<keyword id="KW-0021">Allosteric enzyme</keyword>
<keyword id="KW-0067">ATP-binding</keyword>
<keyword id="KW-0963">Cytoplasm</keyword>
<keyword id="KW-0418">Kinase</keyword>
<keyword id="KW-0547">Nucleotide-binding</keyword>
<keyword id="KW-0665">Pyrimidine biosynthesis</keyword>
<keyword id="KW-1185">Reference proteome</keyword>
<keyword id="KW-0808">Transferase</keyword>
<name>PYRH_JANSC</name>
<sequence length="249" mass="26964">MPNDVTPGHPAGDDAKYARVMLKISGEALMGDQGFGLHPPTVERIAREIQSVHDMGVEICLVIGGGNIFRGLQGSAQGMERTTADYMGMLATVMNALAMQGALESLGVYTRVISAITMNEVAEPYIRRRAIRHLEKKRVCIFAAGTGNPYFTTDTAATLRASEMDCEAIFKGTKVDGVYDKDPAKHADAKRYETVTYDEVLAQHLGVMDASAIALARENKLPIMVFSLDEPGGFRSILDGTGTYTKVVE</sequence>
<feature type="chain" id="PRO_0000323867" description="Uridylate kinase">
    <location>
        <begin position="1"/>
        <end position="249"/>
    </location>
</feature>
<feature type="region of interest" description="Involved in allosteric activation by GTP" evidence="1">
    <location>
        <begin position="31"/>
        <end position="36"/>
    </location>
</feature>
<feature type="binding site" evidence="1">
    <location>
        <begin position="23"/>
        <end position="26"/>
    </location>
    <ligand>
        <name>ATP</name>
        <dbReference type="ChEBI" id="CHEBI:30616"/>
    </ligand>
</feature>
<feature type="binding site" evidence="1">
    <location>
        <position position="65"/>
    </location>
    <ligand>
        <name>UMP</name>
        <dbReference type="ChEBI" id="CHEBI:57865"/>
    </ligand>
</feature>
<feature type="binding site" evidence="1">
    <location>
        <position position="66"/>
    </location>
    <ligand>
        <name>ATP</name>
        <dbReference type="ChEBI" id="CHEBI:30616"/>
    </ligand>
</feature>
<feature type="binding site" evidence="1">
    <location>
        <position position="70"/>
    </location>
    <ligand>
        <name>ATP</name>
        <dbReference type="ChEBI" id="CHEBI:30616"/>
    </ligand>
</feature>
<feature type="binding site" evidence="1">
    <location>
        <position position="85"/>
    </location>
    <ligand>
        <name>UMP</name>
        <dbReference type="ChEBI" id="CHEBI:57865"/>
    </ligand>
</feature>
<feature type="binding site" evidence="1">
    <location>
        <begin position="146"/>
        <end position="153"/>
    </location>
    <ligand>
        <name>UMP</name>
        <dbReference type="ChEBI" id="CHEBI:57865"/>
    </ligand>
</feature>
<feature type="binding site" evidence="1">
    <location>
        <position position="173"/>
    </location>
    <ligand>
        <name>ATP</name>
        <dbReference type="ChEBI" id="CHEBI:30616"/>
    </ligand>
</feature>
<feature type="binding site" evidence="1">
    <location>
        <position position="179"/>
    </location>
    <ligand>
        <name>ATP</name>
        <dbReference type="ChEBI" id="CHEBI:30616"/>
    </ligand>
</feature>
<feature type="binding site" evidence="1">
    <location>
        <position position="182"/>
    </location>
    <ligand>
        <name>ATP</name>
        <dbReference type="ChEBI" id="CHEBI:30616"/>
    </ligand>
</feature>
<comment type="function">
    <text evidence="1">Catalyzes the reversible phosphorylation of UMP to UDP.</text>
</comment>
<comment type="catalytic activity">
    <reaction evidence="1">
        <text>UMP + ATP = UDP + ADP</text>
        <dbReference type="Rhea" id="RHEA:24400"/>
        <dbReference type="ChEBI" id="CHEBI:30616"/>
        <dbReference type="ChEBI" id="CHEBI:57865"/>
        <dbReference type="ChEBI" id="CHEBI:58223"/>
        <dbReference type="ChEBI" id="CHEBI:456216"/>
        <dbReference type="EC" id="2.7.4.22"/>
    </reaction>
</comment>
<comment type="activity regulation">
    <text evidence="1">Allosterically activated by GTP. Inhibited by UTP.</text>
</comment>
<comment type="pathway">
    <text evidence="1">Pyrimidine metabolism; CTP biosynthesis via de novo pathway; UDP from UMP (UMPK route): step 1/1.</text>
</comment>
<comment type="subunit">
    <text evidence="1">Homohexamer.</text>
</comment>
<comment type="subcellular location">
    <subcellularLocation>
        <location evidence="1">Cytoplasm</location>
    </subcellularLocation>
</comment>
<comment type="similarity">
    <text evidence="1">Belongs to the UMP kinase family.</text>
</comment>